<comment type="function">
    <text evidence="1 2 4 5 7 8">DNA- and RNA-binding protein involved in various processes, such as translational repression, RNA stabilization, mRNA splicing, DNA repair and transcription regulation (PubMed:11574481, PubMed:16354698, PubMed:7852402). Predominantly acts as a RNA-binding protein: binds preferentially to the 5'-[CU]CUGCG-3' RNA motif and specifically recognizes mRNA transcripts modified by C5-methylcytosine (m5C) (By similarity). Promotes mRNA stabilization: acts by binding to m5C-containing mRNAs and recruiting the mRNA stability maintainer ELAVL1, thereby preventing mRNA decay (By similarity). Component of the CRD-mediated complex that promotes MYC mRNA stability (By similarity). Contributes to the regulation of translation by modulating the interaction between the mRNA and eukaryotic initiation factors (PubMed:12582179). Plays a key role in RNA composition of extracellular exosomes by defining the sorting of small non-coding RNAs, such as tRNAs, Y RNAs, Vault RNAs and miRNAs (By similarity). Probably sorts RNAs in exosomes by recognizing and binding C5-methylcytosine (m5C)-containing RNAs (By similarity). Acts as a key effector of epidermal progenitors by preventing epidermal progenitor senescence: acts by regulating the translation of a senescence-associated subset of cytokine mRNAs, possibly by binding to m5C-containing mRNAs (By similarity). Also involved in pre-mRNA alternative splicing regulation: binds to splice sites in pre-mRNA and regulates splice site selection (By similarity). Binds to TSC22D1 transcripts, thereby inhibiting their translation and negatively regulating TGF-beta-mediated transcription of COL1A2 (By similarity). Also able to bind DNA: regulates transcription of the multidrug resistance gene MDR1 is enhanced in presence of the APEX1 acetylated form at 'Lys-6' and 'Lys-7' (By similarity). Binds to promoters that contain a Y-box (5'-CTGATTGGCCAA-3'), such as MDR1 and HLA class II genes (By similarity). Promotes separation of DNA strands that contain mismatches or are modified by cisplatin (By similarity). Has endonucleolytic activity and can introduce nicks or breaks into double-stranded DNA, suggesting a role in DNA repair (By similarity). The secreted form acts as an extracellular mitogen and stimulates cell migration and proliferation (By similarity).</text>
</comment>
<comment type="subunit">
    <text evidence="1 2 5 7">Homodimer in the presence of ATP (PubMed:12582179). Component of the coding region determinant (CRD)-mediated complex, composed of DHX9, HNRNPU, IGF2BP1, SYNCRIP and YBX1 (By similarity). Identified in a IGF2BP1-dependent mRNP granule complex containing untranslated mRNAs (By similarity). Component of the U11/U12 snRNPs that are part of the U12-type spliceosome (By similarity). Identified in a histone pre-mRNA complex, at least composed of ERI1, LSM11, SLBP, SNRPB, SYNCRIP and YBX1 (By similarity). Interacts with IGF2BP1 and RBBP6 (PubMed:16354698). Component of cytoplasmic messenger ribonucleoprotein particles (mRNPs) (PubMed:16354698). Interacts with AKT1, MBNL1, SFRS9, SFRS12, ALYREF/THOC4, MSH2, XRCC5, WRN and NCL (PubMed:16354698). Interacts (via C-terminus) with APEX1 (via N-terminus); the interaction is increased with APEX1 acetylated at 'Lys-6' and 'Lys-7' (By similarity). Interacts with AGO1 and AGO2 (By similarity). Interacts with ANKRD2 (By similarity). Interacts with DERA (By similarity). Interacts with FMR1; this interaction occurs in association with polyribosome (By similarity). Interacts with ZBTB7B (By similarity). Interacts with HDGF (By similarity). Interacts with ELAVL1; leading to ELAVL1 recruitment on C5-methylcytosine (m5C)-containing mRNAs and subsequent mRNA stability (By similarity). Interacts with PURB (By similarity).</text>
</comment>
<comment type="subcellular location">
    <subcellularLocation>
        <location evidence="5 6 7">Cytoplasm</location>
    </subcellularLocation>
    <subcellularLocation>
        <location evidence="5 6 7">Nucleus</location>
    </subcellularLocation>
    <subcellularLocation>
        <location evidence="8">Cytoplasmic granule</location>
    </subcellularLocation>
    <subcellularLocation>
        <location evidence="2">Secreted</location>
    </subcellularLocation>
    <subcellularLocation>
        <location evidence="2">Secreted</location>
        <location evidence="2">Extracellular exosome</location>
    </subcellularLocation>
    <subcellularLocation>
        <location evidence="1">Cytoplasm</location>
        <location evidence="1">P-body</location>
    </subcellularLocation>
    <text evidence="2 5">Predominantly cytoplasmic in proliferating cells (By similarity). Cytotoxic stress and DNA damage enhance translocation to the nucleus (By similarity). Localized in cytoplasmic mRNP granules containing untranslated mRNAs (By similarity). Shuttles between nucleus and cytoplasm (PubMed:12582179). Localized with DDX1, MBNL1 and TIAL1 in stress granules upon stress (By similarity). Secreted by mesangial and monocytic cells after inflammatory challenges (By similarity).</text>
</comment>
<comment type="domain">
    <text evidence="2">In the CSD domain, Trp-65 specifically recognizes C5-methylcytosine (m5C) modification through its indole ring.</text>
</comment>
<comment type="PTM">
    <text evidence="1">Ubiquitinated by RBBP6; leading to a decrease of YBX1 transactivational ability.</text>
</comment>
<comment type="PTM">
    <text evidence="1 2 7">Phosphorylated; increased by TGFB1 treatment (By similarity). Phosphorylation by PKB/AKT1 reduces interaction with cytoplasmic mRNA (PubMed:16354698). In the absence of phosphorylation the protein is retained in the cytoplasm (By similarity).</text>
</comment>
<comment type="PTM">
    <text evidence="6">Cleaved by a 20S proteasomal protease in response to agents that damage DNA (PubMed:16193061). Cleavage takes place in the absence of ubiquitination and ATP. The resulting N-terminal fragment accumulates in the nucleus (PubMed:16193061).</text>
</comment>
<comment type="similarity">
    <text evidence="10">Belongs to the YBX1 family.</text>
</comment>
<dbReference type="EMBL" id="U16821">
    <property type="protein sequence ID" value="AAA66069.1"/>
    <property type="molecule type" value="mRNA"/>
</dbReference>
<dbReference type="PIR" id="A55971">
    <property type="entry name" value="A55971"/>
</dbReference>
<dbReference type="RefSeq" id="NP_001076254.1">
    <property type="nucleotide sequence ID" value="NM_001082785.1"/>
</dbReference>
<dbReference type="SMR" id="Q28618"/>
<dbReference type="BioGRID" id="1172602">
    <property type="interactions" value="2"/>
</dbReference>
<dbReference type="FunCoup" id="Q28618">
    <property type="interactions" value="935"/>
</dbReference>
<dbReference type="STRING" id="9986.ENSOCUP00000023346"/>
<dbReference type="iPTMnet" id="Q28618"/>
<dbReference type="PaxDb" id="9986-ENSOCUP00000019994"/>
<dbReference type="GeneID" id="100009583"/>
<dbReference type="KEGG" id="ocu:100009583"/>
<dbReference type="CTD" id="4904"/>
<dbReference type="eggNOG" id="KOG3070">
    <property type="taxonomic scope" value="Eukaryota"/>
</dbReference>
<dbReference type="InParanoid" id="Q28618"/>
<dbReference type="OrthoDB" id="203339at2759"/>
<dbReference type="Proteomes" id="UP000001811">
    <property type="component" value="Unplaced"/>
</dbReference>
<dbReference type="GO" id="GO:0010494">
    <property type="term" value="C:cytoplasmic stress granule"/>
    <property type="evidence" value="ECO:0000250"/>
    <property type="project" value="UniProtKB"/>
</dbReference>
<dbReference type="GO" id="GO:0070062">
    <property type="term" value="C:extracellular exosome"/>
    <property type="evidence" value="ECO:0000250"/>
    <property type="project" value="UniProtKB"/>
</dbReference>
<dbReference type="GO" id="GO:0071204">
    <property type="term" value="C:histone pre-mRNA 3'end processing complex"/>
    <property type="evidence" value="ECO:0000250"/>
    <property type="project" value="UniProtKB"/>
</dbReference>
<dbReference type="GO" id="GO:0000932">
    <property type="term" value="C:P-body"/>
    <property type="evidence" value="ECO:0007669"/>
    <property type="project" value="UniProtKB-SubCell"/>
</dbReference>
<dbReference type="GO" id="GO:1990904">
    <property type="term" value="C:ribonucleoprotein complex"/>
    <property type="evidence" value="ECO:0000250"/>
    <property type="project" value="UniProtKB"/>
</dbReference>
<dbReference type="GO" id="GO:0062153">
    <property type="term" value="F:C5-methylcytidine-containing RNA reader activity"/>
    <property type="evidence" value="ECO:0000250"/>
    <property type="project" value="UniProtKB"/>
</dbReference>
<dbReference type="GO" id="GO:0003677">
    <property type="term" value="F:DNA binding"/>
    <property type="evidence" value="ECO:0007669"/>
    <property type="project" value="UniProtKB-KW"/>
</dbReference>
<dbReference type="GO" id="GO:0035198">
    <property type="term" value="F:miRNA binding"/>
    <property type="evidence" value="ECO:0000250"/>
    <property type="project" value="UniProtKB"/>
</dbReference>
<dbReference type="GO" id="GO:0003723">
    <property type="term" value="F:RNA binding"/>
    <property type="evidence" value="ECO:0000250"/>
    <property type="project" value="UniProtKB"/>
</dbReference>
<dbReference type="GO" id="GO:0070934">
    <property type="term" value="P:CRD-mediated mRNA stabilization"/>
    <property type="evidence" value="ECO:0000250"/>
    <property type="project" value="UniProtKB"/>
</dbReference>
<dbReference type="GO" id="GO:0048598">
    <property type="term" value="P:embryonic morphogenesis"/>
    <property type="evidence" value="ECO:0000250"/>
    <property type="project" value="UniProtKB"/>
</dbReference>
<dbReference type="GO" id="GO:0008544">
    <property type="term" value="P:epidermis development"/>
    <property type="evidence" value="ECO:0000250"/>
    <property type="project" value="UniProtKB"/>
</dbReference>
<dbReference type="GO" id="GO:1990428">
    <property type="term" value="P:miRNA transport"/>
    <property type="evidence" value="ECO:0000250"/>
    <property type="project" value="UniProtKB"/>
</dbReference>
<dbReference type="GO" id="GO:0006397">
    <property type="term" value="P:mRNA processing"/>
    <property type="evidence" value="ECO:0007669"/>
    <property type="project" value="UniProtKB-KW"/>
</dbReference>
<dbReference type="GO" id="GO:0048255">
    <property type="term" value="P:mRNA stabilization"/>
    <property type="evidence" value="ECO:0000250"/>
    <property type="project" value="UniProtKB"/>
</dbReference>
<dbReference type="GO" id="GO:2000773">
    <property type="term" value="P:negative regulation of cellular senescence"/>
    <property type="evidence" value="ECO:0000250"/>
    <property type="project" value="UniProtKB"/>
</dbReference>
<dbReference type="GO" id="GO:0017148">
    <property type="term" value="P:negative regulation of translation"/>
    <property type="evidence" value="ECO:0000250"/>
    <property type="project" value="UniProtKB"/>
</dbReference>
<dbReference type="GO" id="GO:0051781">
    <property type="term" value="P:positive regulation of cell division"/>
    <property type="evidence" value="ECO:0007669"/>
    <property type="project" value="UniProtKB-KW"/>
</dbReference>
<dbReference type="GO" id="GO:0008380">
    <property type="term" value="P:RNA splicing"/>
    <property type="evidence" value="ECO:0007669"/>
    <property type="project" value="UniProtKB-KW"/>
</dbReference>
<dbReference type="GO" id="GO:0050658">
    <property type="term" value="P:RNA transport"/>
    <property type="evidence" value="ECO:0000250"/>
    <property type="project" value="UniProtKB"/>
</dbReference>
<dbReference type="GO" id="GO:0051031">
    <property type="term" value="P:tRNA transport"/>
    <property type="evidence" value="ECO:0000250"/>
    <property type="project" value="UniProtKB"/>
</dbReference>
<dbReference type="CDD" id="cd04458">
    <property type="entry name" value="CSP_CDS"/>
    <property type="match status" value="1"/>
</dbReference>
<dbReference type="FunFam" id="2.40.50.140:FF:000054">
    <property type="entry name" value="Nuclease-sensitive element-binding protein 1"/>
    <property type="match status" value="1"/>
</dbReference>
<dbReference type="Gene3D" id="2.40.50.140">
    <property type="entry name" value="Nucleic acid-binding proteins"/>
    <property type="match status" value="1"/>
</dbReference>
<dbReference type="InterPro" id="IPR050181">
    <property type="entry name" value="Cold_shock_domain"/>
</dbReference>
<dbReference type="InterPro" id="IPR011129">
    <property type="entry name" value="CSD"/>
</dbReference>
<dbReference type="InterPro" id="IPR019844">
    <property type="entry name" value="CSD_CS"/>
</dbReference>
<dbReference type="InterPro" id="IPR002059">
    <property type="entry name" value="CSP_DNA-bd"/>
</dbReference>
<dbReference type="InterPro" id="IPR012340">
    <property type="entry name" value="NA-bd_OB-fold"/>
</dbReference>
<dbReference type="PANTHER" id="PTHR11544">
    <property type="entry name" value="COLD SHOCK DOMAIN CONTAINING PROTEINS"/>
    <property type="match status" value="1"/>
</dbReference>
<dbReference type="Pfam" id="PF00313">
    <property type="entry name" value="CSD"/>
    <property type="match status" value="1"/>
</dbReference>
<dbReference type="PRINTS" id="PR00050">
    <property type="entry name" value="COLDSHOCK"/>
</dbReference>
<dbReference type="SMART" id="SM00357">
    <property type="entry name" value="CSP"/>
    <property type="match status" value="1"/>
</dbReference>
<dbReference type="SUPFAM" id="SSF50249">
    <property type="entry name" value="Nucleic acid-binding proteins"/>
    <property type="match status" value="1"/>
</dbReference>
<dbReference type="PROSITE" id="PS00352">
    <property type="entry name" value="CSD_1"/>
    <property type="match status" value="1"/>
</dbReference>
<dbReference type="PROSITE" id="PS51857">
    <property type="entry name" value="CSD_2"/>
    <property type="match status" value="1"/>
</dbReference>
<evidence type="ECO:0000250" key="1">
    <source>
        <dbReference type="UniProtKB" id="P62960"/>
    </source>
</evidence>
<evidence type="ECO:0000250" key="2">
    <source>
        <dbReference type="UniProtKB" id="P67809"/>
    </source>
</evidence>
<evidence type="ECO:0000256" key="3">
    <source>
        <dbReference type="SAM" id="MobiDB-lite"/>
    </source>
</evidence>
<evidence type="ECO:0000269" key="4">
    <source>
    </source>
</evidence>
<evidence type="ECO:0000269" key="5">
    <source>
    </source>
</evidence>
<evidence type="ECO:0000269" key="6">
    <source>
    </source>
</evidence>
<evidence type="ECO:0000269" key="7">
    <source>
    </source>
</evidence>
<evidence type="ECO:0000269" key="8">
    <source>
    </source>
</evidence>
<evidence type="ECO:0000303" key="9">
    <source>
    </source>
</evidence>
<evidence type="ECO:0000305" key="10"/>
<sequence>MSSEAETQQPPAAPPAAPALSAAETKPGTTGSGAGSGGPGGLTSAAPAGGDKKVIATKVLGTVKWFNVRNGYGFINRNDTKEDVFVHQTAIKKNNPRKYLRSVGDGETVEFDVVEGEKGAEAANVTGPGGVPVQGSKYAADRNHYRRYPRRRGPPRNYQQNYQNSESGEKNEGSESAPEGQAQQRRPYRRRRFPPYYMRRPYGRRPQYSNPPVQGEVMEGADNQGAGEQGRPVRQNMYRGYRPRFRRGPPRQRQPREDGNEEDKENQGDETQGQQPPPSRYRRNFNYRRRRPDNPKPQDGKETKAADPPAENSSAPEAEQGGAE</sequence>
<feature type="initiator methionine" description="Removed" evidence="2">
    <location>
        <position position="1"/>
    </location>
</feature>
<feature type="chain" id="PRO_0000227814" description="Y-box-binding protein 1">
    <location>
        <begin position="2"/>
        <end position="324"/>
    </location>
</feature>
<feature type="domain" description="CSD">
    <location>
        <begin position="58"/>
        <end position="128"/>
    </location>
</feature>
<feature type="region of interest" description="Disordered" evidence="3">
    <location>
        <begin position="1"/>
        <end position="49"/>
    </location>
</feature>
<feature type="region of interest" description="Interaction with ss-DNA" evidence="2">
    <location>
        <begin position="15"/>
        <end position="71"/>
    </location>
</feature>
<feature type="region of interest" description="C5-methylcytosine binding" evidence="2">
    <location>
        <begin position="65"/>
        <end position="70"/>
    </location>
</feature>
<feature type="region of interest" description="Disordered" evidence="3">
    <location>
        <begin position="120"/>
        <end position="324"/>
    </location>
</feature>
<feature type="compositionally biased region" description="Gly residues" evidence="3">
    <location>
        <begin position="30"/>
        <end position="41"/>
    </location>
</feature>
<feature type="compositionally biased region" description="Basic residues" evidence="3">
    <location>
        <begin position="144"/>
        <end position="154"/>
    </location>
</feature>
<feature type="compositionally biased region" description="Low complexity" evidence="3">
    <location>
        <begin position="155"/>
        <end position="166"/>
    </location>
</feature>
<feature type="compositionally biased region" description="Low complexity" evidence="3">
    <location>
        <begin position="194"/>
        <end position="208"/>
    </location>
</feature>
<feature type="compositionally biased region" description="Basic residues" evidence="3">
    <location>
        <begin position="241"/>
        <end position="250"/>
    </location>
</feature>
<feature type="compositionally biased region" description="Basic residues" evidence="3">
    <location>
        <begin position="280"/>
        <end position="291"/>
    </location>
</feature>
<feature type="compositionally biased region" description="Basic and acidic residues" evidence="3">
    <location>
        <begin position="292"/>
        <end position="305"/>
    </location>
</feature>
<feature type="site" description="Important for C5-methylcytosine-recognition" evidence="2">
    <location>
        <position position="65"/>
    </location>
</feature>
<feature type="site" description="Cleavage; by 20S proteasomal protease" evidence="6">
    <location>
        <begin position="219"/>
        <end position="220"/>
    </location>
</feature>
<feature type="modified residue" description="N-acetylserine" evidence="2">
    <location>
        <position position="2"/>
    </location>
</feature>
<feature type="modified residue" description="Phosphoserine; by PKB/AKT1" evidence="7">
    <location>
        <position position="102"/>
    </location>
</feature>
<feature type="modified residue" description="Phosphotyrosine" evidence="2">
    <location>
        <position position="162"/>
    </location>
</feature>
<feature type="modified residue" description="Phosphoserine" evidence="2">
    <location>
        <position position="165"/>
    </location>
</feature>
<feature type="modified residue" description="Phosphoserine" evidence="2">
    <location>
        <position position="167"/>
    </location>
</feature>
<feature type="modified residue" description="Phosphoserine" evidence="2">
    <location>
        <position position="174"/>
    </location>
</feature>
<feature type="modified residue" description="Phosphoserine" evidence="2">
    <location>
        <position position="176"/>
    </location>
</feature>
<feature type="modified residue" description="N6-acetyllysine" evidence="2">
    <location>
        <position position="301"/>
    </location>
</feature>
<feature type="modified residue" description="N6-acetyllysine" evidence="2">
    <location>
        <position position="304"/>
    </location>
</feature>
<feature type="modified residue" description="Phosphoserine" evidence="2">
    <location>
        <position position="314"/>
    </location>
</feature>
<feature type="cross-link" description="Glycyl lysine isopeptide (Lys-Gly) (interchain with G-Cter in SUMO2)" evidence="2">
    <location>
        <position position="26"/>
    </location>
</feature>
<feature type="cross-link" description="Glycyl lysine isopeptide (Lys-Gly) (interchain with G-Cter in ubiquitin)" evidence="2">
    <location>
        <position position="137"/>
    </location>
</feature>
<feature type="mutagenesis site" description="Abolishes phosphorylation by PKB/AKT1." evidence="7">
    <original>S</original>
    <variation>A</variation>
    <location>
        <position position="102"/>
    </location>
</feature>
<name>YBOX1_RABIT</name>
<protein>
    <recommendedName>
        <fullName evidence="9">Y-box-binding protein 1</fullName>
        <shortName evidence="9">YB-1</shortName>
    </recommendedName>
    <alternativeName>
        <fullName>Nuclease-sensitive element-binding protein 1</fullName>
    </alternativeName>
    <alternativeName>
        <fullName>Y-box transcription factor</fullName>
    </alternativeName>
    <alternativeName>
        <fullName evidence="9">p50</fullName>
    </alternativeName>
</protein>
<proteinExistence type="evidence at protein level"/>
<organism>
    <name type="scientific">Oryctolagus cuniculus</name>
    <name type="common">Rabbit</name>
    <dbReference type="NCBI Taxonomy" id="9986"/>
    <lineage>
        <taxon>Eukaryota</taxon>
        <taxon>Metazoa</taxon>
        <taxon>Chordata</taxon>
        <taxon>Craniata</taxon>
        <taxon>Vertebrata</taxon>
        <taxon>Euteleostomi</taxon>
        <taxon>Mammalia</taxon>
        <taxon>Eutheria</taxon>
        <taxon>Euarchontoglires</taxon>
        <taxon>Glires</taxon>
        <taxon>Lagomorpha</taxon>
        <taxon>Leporidae</taxon>
        <taxon>Oryctolagus</taxon>
    </lineage>
</organism>
<reference key="1">
    <citation type="journal article" date="1995" name="J. Biol. Chem.">
        <title>The major protein of messenger ribonucleoprotein particles in somatic cells is a member of the Y-box binding transcription factor family.</title>
        <authorList>
            <person name="Evdokimova V.M."/>
            <person name="Wei C.L."/>
            <person name="Sitikov A.S."/>
            <person name="Simonenko P.N."/>
            <person name="Lazarev O.A."/>
            <person name="Vasilenko K.S."/>
            <person name="Ustinov V.A."/>
            <person name="Hershey J.W."/>
            <person name="Ovchinnikov L.P."/>
        </authorList>
    </citation>
    <scope>NUCLEOTIDE SEQUENCE [MRNA]</scope>
    <scope>FUNCTION</scope>
    <scope>SUBCELLULAR LOCATION</scope>
    <source>
        <tissue>Bone marrow</tissue>
    </source>
</reference>
<reference key="2">
    <citation type="journal article" date="2005" name="EMBO J.">
        <title>Proteasome-mediated cleavage of the Y-box-binding protein 1 is linked to DNA-damage stress response.</title>
        <authorList>
            <person name="Sorokin A.V."/>
            <person name="Selyutina A.A."/>
            <person name="Skabkin M.A."/>
            <person name="Guryanov S.G."/>
            <person name="Nazimov I.V."/>
            <person name="Richard C."/>
            <person name="Th'ng J."/>
            <person name="Yau J."/>
            <person name="Sorensen P.H.B."/>
            <person name="Ovchinnikov L.P."/>
            <person name="Evdokimova V."/>
        </authorList>
    </citation>
    <scope>PARTIAL PROTEIN SEQUENCE</scope>
    <scope>PROTEOLYTIC CLEAVAGE BY 20S PROTEASOMAL PROTEASE</scope>
    <scope>SUBCELLULAR LOCATION</scope>
</reference>
<reference key="3">
    <citation type="journal article" date="2001" name="EMBO J.">
        <title>The major mRNA-associated protein YB-1 is a potent 5' cap-dependent mRNA stabilizer.</title>
        <authorList>
            <person name="Evdokimova V."/>
            <person name="Ruzanov P."/>
            <person name="Imataka H."/>
            <person name="Raught B."/>
            <person name="Svitkin Y."/>
            <person name="Ovchinnikov L.P."/>
            <person name="Sonenberg N."/>
        </authorList>
    </citation>
    <scope>FUNCTION</scope>
</reference>
<reference key="4">
    <citation type="journal article" date="2003" name="J. Biol. Chem.">
        <title>The mRNA-binding protein YB-1 (p50) prevents association of the eukaryotic initiation factor eIF4G with mRNA and inhibits protein synthesis at the initiation stage.</title>
        <authorList>
            <person name="Nekrasov M.P."/>
            <person name="Ivshina M.P."/>
            <person name="Chernov K.G."/>
            <person name="Kovrigina E.A."/>
            <person name="Evdokimova V.M."/>
            <person name="Thomas A.A.M."/>
            <person name="Hershey J.W.B."/>
            <person name="Ovchinnikov L.P."/>
        </authorList>
    </citation>
    <scope>FUNCTION</scope>
    <scope>SUBUNIT</scope>
    <scope>SUBCELLULAR LOCATION</scope>
</reference>
<reference key="5">
    <citation type="journal article" date="2006" name="Mol. Cell. Biol.">
        <title>Akt-mediated YB-1 phosphorylation activates translation of silent mRNA species.</title>
        <authorList>
            <person name="Evdokimova V."/>
            <person name="Ruzanov P."/>
            <person name="Anglesio M.S."/>
            <person name="Sorokin A.V."/>
            <person name="Ovchinnikov L.P."/>
            <person name="Buckley J."/>
            <person name="Triche T.J."/>
            <person name="Sonenberg N."/>
            <person name="Sorensen P.H.B."/>
        </authorList>
    </citation>
    <scope>MUTAGENESIS OF SER-102</scope>
    <scope>PHOSPHORYLATION AT SER-102</scope>
    <scope>SUBCELLULAR LOCATION</scope>
    <scope>INTERACTION WITH AKT1</scope>
    <scope>FUNCTION</scope>
</reference>
<keyword id="KW-0007">Acetylation</keyword>
<keyword id="KW-0010">Activator</keyword>
<keyword id="KW-0963">Cytoplasm</keyword>
<keyword id="KW-0903">Direct protein sequencing</keyword>
<keyword id="KW-0238">DNA-binding</keyword>
<keyword id="KW-1017">Isopeptide bond</keyword>
<keyword id="KW-0497">Mitogen</keyword>
<keyword id="KW-0507">mRNA processing</keyword>
<keyword id="KW-0508">mRNA splicing</keyword>
<keyword id="KW-0539">Nucleus</keyword>
<keyword id="KW-0597">Phosphoprotein</keyword>
<keyword id="KW-1185">Reference proteome</keyword>
<keyword id="KW-0678">Repressor</keyword>
<keyword id="KW-0694">RNA-binding</keyword>
<keyword id="KW-0964">Secreted</keyword>
<keyword id="KW-0804">Transcription</keyword>
<keyword id="KW-0805">Transcription regulation</keyword>
<keyword id="KW-0832">Ubl conjugation</keyword>
<gene>
    <name evidence="2" type="primary">YBX1</name>
    <name evidence="9" type="synonym">YB1</name>
</gene>
<accession>Q28618</accession>